<comment type="function">
    <text evidence="1">Catalyzes the transfer of endogenously produced octanoic acid from octanoyl-acyl-carrier-protein onto the lipoyl domains of lipoate-dependent enzymes. Lipoyl-ACP can also act as a substrate although octanoyl-ACP is likely to be the physiological substrate.</text>
</comment>
<comment type="catalytic activity">
    <reaction evidence="1">
        <text>octanoyl-[ACP] + L-lysyl-[protein] = N(6)-octanoyl-L-lysyl-[protein] + holo-[ACP] + H(+)</text>
        <dbReference type="Rhea" id="RHEA:17665"/>
        <dbReference type="Rhea" id="RHEA-COMP:9636"/>
        <dbReference type="Rhea" id="RHEA-COMP:9685"/>
        <dbReference type="Rhea" id="RHEA-COMP:9752"/>
        <dbReference type="Rhea" id="RHEA-COMP:9928"/>
        <dbReference type="ChEBI" id="CHEBI:15378"/>
        <dbReference type="ChEBI" id="CHEBI:29969"/>
        <dbReference type="ChEBI" id="CHEBI:64479"/>
        <dbReference type="ChEBI" id="CHEBI:78463"/>
        <dbReference type="ChEBI" id="CHEBI:78809"/>
        <dbReference type="EC" id="2.3.1.181"/>
    </reaction>
</comment>
<comment type="pathway">
    <text evidence="1">Protein modification; protein lipoylation via endogenous pathway; protein N(6)-(lipoyl)lysine from octanoyl-[acyl-carrier-protein]: step 1/2.</text>
</comment>
<comment type="subcellular location">
    <subcellularLocation>
        <location evidence="1">Cytoplasm</location>
    </subcellularLocation>
</comment>
<comment type="miscellaneous">
    <text evidence="1">In the reaction, the free carboxyl group of octanoic acid is attached via an amide linkage to the epsilon-amino group of a specific lysine residue of lipoyl domains of lipoate-dependent enzymes.</text>
</comment>
<comment type="similarity">
    <text evidence="1">Belongs to the LipB family.</text>
</comment>
<keyword id="KW-0012">Acyltransferase</keyword>
<keyword id="KW-0963">Cytoplasm</keyword>
<keyword id="KW-1185">Reference proteome</keyword>
<keyword id="KW-0808">Transferase</keyword>
<name>LIPB_FLAPJ</name>
<accession>A6GYW1</accession>
<dbReference type="EC" id="2.3.1.181" evidence="1"/>
<dbReference type="EMBL" id="AM398681">
    <property type="protein sequence ID" value="CAL43284.1"/>
    <property type="molecule type" value="Genomic_DNA"/>
</dbReference>
<dbReference type="RefSeq" id="WP_011963333.1">
    <property type="nucleotide sequence ID" value="NC_009613.3"/>
</dbReference>
<dbReference type="RefSeq" id="YP_001296095.1">
    <property type="nucleotide sequence ID" value="NC_009613.3"/>
</dbReference>
<dbReference type="SMR" id="A6GYW1"/>
<dbReference type="STRING" id="402612.FP1201"/>
<dbReference type="EnsemblBacteria" id="CAL43284">
    <property type="protein sequence ID" value="CAL43284"/>
    <property type="gene ID" value="FP1201"/>
</dbReference>
<dbReference type="GeneID" id="66553105"/>
<dbReference type="KEGG" id="fps:FP1201"/>
<dbReference type="PATRIC" id="fig|402612.5.peg.1215"/>
<dbReference type="eggNOG" id="COG0321">
    <property type="taxonomic scope" value="Bacteria"/>
</dbReference>
<dbReference type="HOGENOM" id="CLU_035168_1_3_10"/>
<dbReference type="OrthoDB" id="9787061at2"/>
<dbReference type="UniPathway" id="UPA00538">
    <property type="reaction ID" value="UER00592"/>
</dbReference>
<dbReference type="Proteomes" id="UP000006394">
    <property type="component" value="Chromosome"/>
</dbReference>
<dbReference type="GO" id="GO:0005737">
    <property type="term" value="C:cytoplasm"/>
    <property type="evidence" value="ECO:0007669"/>
    <property type="project" value="UniProtKB-SubCell"/>
</dbReference>
<dbReference type="GO" id="GO:0033819">
    <property type="term" value="F:lipoyl(octanoyl) transferase activity"/>
    <property type="evidence" value="ECO:0007669"/>
    <property type="project" value="UniProtKB-EC"/>
</dbReference>
<dbReference type="GO" id="GO:0036211">
    <property type="term" value="P:protein modification process"/>
    <property type="evidence" value="ECO:0007669"/>
    <property type="project" value="InterPro"/>
</dbReference>
<dbReference type="CDD" id="cd16444">
    <property type="entry name" value="LipB"/>
    <property type="match status" value="1"/>
</dbReference>
<dbReference type="FunFam" id="3.30.930.10:FF:000035">
    <property type="entry name" value="Putative lipoyltransferase 2, mitochondrial"/>
    <property type="match status" value="1"/>
</dbReference>
<dbReference type="Gene3D" id="3.30.930.10">
    <property type="entry name" value="Bira Bifunctional Protein, Domain 2"/>
    <property type="match status" value="1"/>
</dbReference>
<dbReference type="HAMAP" id="MF_00013">
    <property type="entry name" value="LipB"/>
    <property type="match status" value="1"/>
</dbReference>
<dbReference type="InterPro" id="IPR045864">
    <property type="entry name" value="aa-tRNA-synth_II/BPL/LPL"/>
</dbReference>
<dbReference type="InterPro" id="IPR004143">
    <property type="entry name" value="BPL_LPL_catalytic"/>
</dbReference>
<dbReference type="InterPro" id="IPR000544">
    <property type="entry name" value="Octanoyltransferase"/>
</dbReference>
<dbReference type="InterPro" id="IPR020605">
    <property type="entry name" value="Octanoyltransferase_CS"/>
</dbReference>
<dbReference type="NCBIfam" id="TIGR00214">
    <property type="entry name" value="lipB"/>
    <property type="match status" value="1"/>
</dbReference>
<dbReference type="NCBIfam" id="NF010925">
    <property type="entry name" value="PRK14345.1"/>
    <property type="match status" value="1"/>
</dbReference>
<dbReference type="PANTHER" id="PTHR10993">
    <property type="entry name" value="OCTANOYLTRANSFERASE"/>
    <property type="match status" value="1"/>
</dbReference>
<dbReference type="PANTHER" id="PTHR10993:SF12">
    <property type="entry name" value="OCTANOYLTRANSFERASE"/>
    <property type="match status" value="1"/>
</dbReference>
<dbReference type="Pfam" id="PF21948">
    <property type="entry name" value="LplA-B_cat"/>
    <property type="match status" value="1"/>
</dbReference>
<dbReference type="PIRSF" id="PIRSF016262">
    <property type="entry name" value="LPLase"/>
    <property type="match status" value="1"/>
</dbReference>
<dbReference type="SUPFAM" id="SSF55681">
    <property type="entry name" value="Class II aaRS and biotin synthetases"/>
    <property type="match status" value="1"/>
</dbReference>
<dbReference type="PROSITE" id="PS51733">
    <property type="entry name" value="BPL_LPL_CATALYTIC"/>
    <property type="match status" value="1"/>
</dbReference>
<dbReference type="PROSITE" id="PS01313">
    <property type="entry name" value="LIPB"/>
    <property type="match status" value="1"/>
</dbReference>
<gene>
    <name evidence="1" type="primary">lipB</name>
    <name type="ordered locus">FP1201</name>
</gene>
<organism>
    <name type="scientific">Flavobacterium psychrophilum (strain ATCC 49511 / DSM 21280 / CIP 103535 / JIP02/86)</name>
    <dbReference type="NCBI Taxonomy" id="402612"/>
    <lineage>
        <taxon>Bacteria</taxon>
        <taxon>Pseudomonadati</taxon>
        <taxon>Bacteroidota</taxon>
        <taxon>Flavobacteriia</taxon>
        <taxon>Flavobacteriales</taxon>
        <taxon>Flavobacteriaceae</taxon>
        <taxon>Flavobacterium</taxon>
    </lineage>
</organism>
<evidence type="ECO:0000255" key="1">
    <source>
        <dbReference type="HAMAP-Rule" id="MF_00013"/>
    </source>
</evidence>
<evidence type="ECO:0000255" key="2">
    <source>
        <dbReference type="PROSITE-ProRule" id="PRU01067"/>
    </source>
</evidence>
<reference key="1">
    <citation type="journal article" date="2007" name="Nat. Biotechnol.">
        <title>Complete genome sequence of the fish pathogen Flavobacterium psychrophilum.</title>
        <authorList>
            <person name="Duchaud E."/>
            <person name="Boussaha M."/>
            <person name="Loux V."/>
            <person name="Bernardet J.-F."/>
            <person name="Michel C."/>
            <person name="Kerouault B."/>
            <person name="Mondot S."/>
            <person name="Nicolas P."/>
            <person name="Bossy R."/>
            <person name="Caron C."/>
            <person name="Bessieres P."/>
            <person name="Gibrat J.-F."/>
            <person name="Claverol S."/>
            <person name="Dumetz F."/>
            <person name="Le Henaff M."/>
            <person name="Benmansour A."/>
        </authorList>
    </citation>
    <scope>NUCLEOTIDE SEQUENCE [LARGE SCALE GENOMIC DNA]</scope>
    <source>
        <strain>ATCC 49511 / DSM 21280 / CIP 103535 / JIP02/86</strain>
    </source>
</reference>
<sequence>MNKTIQLQDLGHKDYKATWDYQEQLFQNVLDIKIQNRREERQDQTPNYFLFVEHPHVYTLGKSGDLSNLLLSEKQLEAKGATFYKINRGGDITYHGPGQIVGYPILDLENFFTDIHKYLRLLEEAIILTLAEYNITGTRSEGETGVWLGVGTPFARKICALGVRASRWVTMHGFALNANADLGYFDNIIPCGIKGKAVTSLNVELGVEKVNEEEVKEKILKHFTQLFDCTVI</sequence>
<feature type="chain" id="PRO_0000321634" description="Octanoyltransferase">
    <location>
        <begin position="1"/>
        <end position="232"/>
    </location>
</feature>
<feature type="domain" description="BPL/LPL catalytic" evidence="2">
    <location>
        <begin position="43"/>
        <end position="231"/>
    </location>
</feature>
<feature type="active site" description="Acyl-thioester intermediate" evidence="1">
    <location>
        <position position="191"/>
    </location>
</feature>
<feature type="binding site" evidence="1">
    <location>
        <begin position="88"/>
        <end position="95"/>
    </location>
    <ligand>
        <name>substrate</name>
    </ligand>
</feature>
<feature type="binding site" evidence="1">
    <location>
        <begin position="160"/>
        <end position="162"/>
    </location>
    <ligand>
        <name>substrate</name>
    </ligand>
</feature>
<feature type="binding site" evidence="1">
    <location>
        <begin position="173"/>
        <end position="175"/>
    </location>
    <ligand>
        <name>substrate</name>
    </ligand>
</feature>
<feature type="site" description="Lowers pKa of active site Cys" evidence="1">
    <location>
        <position position="157"/>
    </location>
</feature>
<protein>
    <recommendedName>
        <fullName evidence="1">Octanoyltransferase</fullName>
        <ecNumber evidence="1">2.3.1.181</ecNumber>
    </recommendedName>
    <alternativeName>
        <fullName evidence="1">Lipoate-protein ligase B</fullName>
    </alternativeName>
    <alternativeName>
        <fullName evidence="1">Lipoyl/octanoyl transferase</fullName>
    </alternativeName>
    <alternativeName>
        <fullName evidence="1">Octanoyl-[acyl-carrier-protein]-protein N-octanoyltransferase</fullName>
    </alternativeName>
</protein>
<proteinExistence type="inferred from homology"/>